<proteinExistence type="inferred from homology"/>
<feature type="chain" id="PRO_0000329229" description="Phosphate acyltransferase">
    <location>
        <begin position="1"/>
        <end position="374"/>
    </location>
</feature>
<keyword id="KW-0963">Cytoplasm</keyword>
<keyword id="KW-0444">Lipid biosynthesis</keyword>
<keyword id="KW-0443">Lipid metabolism</keyword>
<keyword id="KW-0594">Phospholipid biosynthesis</keyword>
<keyword id="KW-1208">Phospholipid metabolism</keyword>
<keyword id="KW-1185">Reference proteome</keyword>
<keyword id="KW-0808">Transferase</keyword>
<dbReference type="EC" id="2.3.1.274" evidence="1"/>
<dbReference type="EMBL" id="AM889285">
    <property type="protein sequence ID" value="CAP57019.1"/>
    <property type="molecule type" value="Genomic_DNA"/>
</dbReference>
<dbReference type="EMBL" id="CP001189">
    <property type="protein sequence ID" value="ACI53019.1"/>
    <property type="status" value="ALT_INIT"/>
    <property type="molecule type" value="Genomic_DNA"/>
</dbReference>
<dbReference type="RefSeq" id="WP_012554868.1">
    <property type="nucleotide sequence ID" value="NC_011365.1"/>
</dbReference>
<dbReference type="SMR" id="A9HS30"/>
<dbReference type="STRING" id="272568.GDI3076"/>
<dbReference type="KEGG" id="gdi:GDI3076"/>
<dbReference type="KEGG" id="gdj:Gdia_3292"/>
<dbReference type="eggNOG" id="COG0416">
    <property type="taxonomic scope" value="Bacteria"/>
</dbReference>
<dbReference type="HOGENOM" id="CLU_039379_1_0_5"/>
<dbReference type="OrthoDB" id="9806408at2"/>
<dbReference type="UniPathway" id="UPA00085"/>
<dbReference type="Proteomes" id="UP000001176">
    <property type="component" value="Chromosome"/>
</dbReference>
<dbReference type="GO" id="GO:0005737">
    <property type="term" value="C:cytoplasm"/>
    <property type="evidence" value="ECO:0007669"/>
    <property type="project" value="UniProtKB-SubCell"/>
</dbReference>
<dbReference type="GO" id="GO:0043811">
    <property type="term" value="F:phosphate:acyl-[acyl carrier protein] acyltransferase activity"/>
    <property type="evidence" value="ECO:0007669"/>
    <property type="project" value="UniProtKB-UniRule"/>
</dbReference>
<dbReference type="GO" id="GO:0006633">
    <property type="term" value="P:fatty acid biosynthetic process"/>
    <property type="evidence" value="ECO:0007669"/>
    <property type="project" value="UniProtKB-UniRule"/>
</dbReference>
<dbReference type="GO" id="GO:0008654">
    <property type="term" value="P:phospholipid biosynthetic process"/>
    <property type="evidence" value="ECO:0007669"/>
    <property type="project" value="UniProtKB-KW"/>
</dbReference>
<dbReference type="Gene3D" id="3.40.718.10">
    <property type="entry name" value="Isopropylmalate Dehydrogenase"/>
    <property type="match status" value="1"/>
</dbReference>
<dbReference type="HAMAP" id="MF_00019">
    <property type="entry name" value="PlsX"/>
    <property type="match status" value="1"/>
</dbReference>
<dbReference type="InterPro" id="IPR003664">
    <property type="entry name" value="FA_synthesis"/>
</dbReference>
<dbReference type="InterPro" id="IPR012281">
    <property type="entry name" value="Phospholipid_synth_PlsX-like"/>
</dbReference>
<dbReference type="NCBIfam" id="TIGR00182">
    <property type="entry name" value="plsX"/>
    <property type="match status" value="1"/>
</dbReference>
<dbReference type="PANTHER" id="PTHR30100">
    <property type="entry name" value="FATTY ACID/PHOSPHOLIPID SYNTHESIS PROTEIN PLSX"/>
    <property type="match status" value="1"/>
</dbReference>
<dbReference type="PANTHER" id="PTHR30100:SF1">
    <property type="entry name" value="PHOSPHATE ACYLTRANSFERASE"/>
    <property type="match status" value="1"/>
</dbReference>
<dbReference type="Pfam" id="PF02504">
    <property type="entry name" value="FA_synthesis"/>
    <property type="match status" value="1"/>
</dbReference>
<dbReference type="PIRSF" id="PIRSF002465">
    <property type="entry name" value="Phsphlp_syn_PlsX"/>
    <property type="match status" value="1"/>
</dbReference>
<dbReference type="SUPFAM" id="SSF53659">
    <property type="entry name" value="Isocitrate/Isopropylmalate dehydrogenase-like"/>
    <property type="match status" value="1"/>
</dbReference>
<protein>
    <recommendedName>
        <fullName evidence="1">Phosphate acyltransferase</fullName>
        <ecNumber evidence="1">2.3.1.274</ecNumber>
    </recommendedName>
    <alternativeName>
        <fullName evidence="1">Acyl-ACP phosphotransacylase</fullName>
    </alternativeName>
    <alternativeName>
        <fullName evidence="1">Acyl-[acyl-carrier-protein]--phosphate acyltransferase</fullName>
    </alternativeName>
    <alternativeName>
        <fullName evidence="1">Phosphate-acyl-ACP acyltransferase</fullName>
    </alternativeName>
</protein>
<gene>
    <name evidence="1" type="primary">plsX</name>
    <name type="ordered locus">GDI3076</name>
    <name type="ordered locus">Gdia_3292</name>
</gene>
<organism>
    <name type="scientific">Gluconacetobacter diazotrophicus (strain ATCC 49037 / DSM 5601 / CCUG 37298 / CIP 103539 / LMG 7603 / PAl5)</name>
    <dbReference type="NCBI Taxonomy" id="272568"/>
    <lineage>
        <taxon>Bacteria</taxon>
        <taxon>Pseudomonadati</taxon>
        <taxon>Pseudomonadota</taxon>
        <taxon>Alphaproteobacteria</taxon>
        <taxon>Acetobacterales</taxon>
        <taxon>Acetobacteraceae</taxon>
        <taxon>Gluconacetobacter</taxon>
    </lineage>
</organism>
<accession>A9HS30</accession>
<accession>B5ZL77</accession>
<comment type="function">
    <text evidence="1">Catalyzes the reversible formation of acyl-phosphate (acyl-PO(4)) from acyl-[acyl-carrier-protein] (acyl-ACP). This enzyme utilizes acyl-ACP as fatty acyl donor, but not acyl-CoA.</text>
</comment>
<comment type="catalytic activity">
    <reaction evidence="1">
        <text>a fatty acyl-[ACP] + phosphate = an acyl phosphate + holo-[ACP]</text>
        <dbReference type="Rhea" id="RHEA:42292"/>
        <dbReference type="Rhea" id="RHEA-COMP:9685"/>
        <dbReference type="Rhea" id="RHEA-COMP:14125"/>
        <dbReference type="ChEBI" id="CHEBI:43474"/>
        <dbReference type="ChEBI" id="CHEBI:59918"/>
        <dbReference type="ChEBI" id="CHEBI:64479"/>
        <dbReference type="ChEBI" id="CHEBI:138651"/>
        <dbReference type="EC" id="2.3.1.274"/>
    </reaction>
</comment>
<comment type="pathway">
    <text evidence="1">Lipid metabolism; phospholipid metabolism.</text>
</comment>
<comment type="subunit">
    <text evidence="1">Homodimer. Probably interacts with PlsY.</text>
</comment>
<comment type="subcellular location">
    <subcellularLocation>
        <location evidence="1">Cytoplasm</location>
    </subcellularLocation>
    <text evidence="1">Associated with the membrane possibly through PlsY.</text>
</comment>
<comment type="similarity">
    <text evidence="1">Belongs to the PlsX family.</text>
</comment>
<comment type="sequence caution" evidence="2">
    <conflict type="erroneous initiation">
        <sequence resource="EMBL-CDS" id="ACI53019"/>
    </conflict>
</comment>
<name>PLSX_GLUDA</name>
<sequence length="374" mass="39101">MVYSRQKAGMSETGSSFSGAEPFTLAVDGMGGDGGPEVVVAGLAIAADRHPGARVLLIGDEATLRQELARHPKAAAICTIRPANSAIPMDMKPTAALRVRDSSMRLSMDAVAQGEAQGVVSAGNSGAMLALAKIVVKTLPGVSRPAMAAISPTLKGDVVMLDLGANVACDWRNLVEFAVMGEAFAKAVLGLPAPTIGLLNVGSEELKGDEKLRQAADVLRNSSLAAQFHGFVEGHDITAGTTDVVVTDGFTGNVALKTGEGALKMAFVLLRQVFRSGLLAKLGYLLVRPGLERMREWLDPRRYNGAVFVGLNGVVVKSHGGTDAEGFASAVDVAMDMVTHRFNESIREQLSRLDTLAAMRSGAEKEHPAVAAVS</sequence>
<reference key="1">
    <citation type="journal article" date="2009" name="BMC Genomics">
        <title>Complete genome sequence of the sugarcane nitrogen-fixing endophyte Gluconacetobacter diazotrophicus Pal5.</title>
        <authorList>
            <person name="Bertalan M."/>
            <person name="Albano R."/>
            <person name="de Padua V."/>
            <person name="Rouws L."/>
            <person name="Rojas C."/>
            <person name="Hemerly A."/>
            <person name="Teixeira K."/>
            <person name="Schwab S."/>
            <person name="Araujo J."/>
            <person name="Oliveira A."/>
            <person name="Franca L."/>
            <person name="Magalhaes V."/>
            <person name="Alqueres S."/>
            <person name="Cardoso A."/>
            <person name="Almeida W."/>
            <person name="Loureiro M.M."/>
            <person name="Nogueira E."/>
            <person name="Cidade D."/>
            <person name="Oliveira D."/>
            <person name="Simao T."/>
            <person name="Macedo J."/>
            <person name="Valadao A."/>
            <person name="Dreschsel M."/>
            <person name="Freitas F."/>
            <person name="Vidal M."/>
            <person name="Guedes H."/>
            <person name="Rodrigues E."/>
            <person name="Meneses C."/>
            <person name="Brioso P."/>
            <person name="Pozzer L."/>
            <person name="Figueiredo D."/>
            <person name="Montano H."/>
            <person name="Junior J."/>
            <person name="de Souza Filho G."/>
            <person name="Martin Quintana Flores V."/>
            <person name="Ferreira B."/>
            <person name="Branco A."/>
            <person name="Gonzalez P."/>
            <person name="Guillobel H."/>
            <person name="Lemos M."/>
            <person name="Seibel L."/>
            <person name="Macedo J."/>
            <person name="Alves-Ferreira M."/>
            <person name="Sachetto-Martins G."/>
            <person name="Coelho A."/>
            <person name="Santos E."/>
            <person name="Amaral G."/>
            <person name="Neves A."/>
            <person name="Pacheco A.B."/>
            <person name="Carvalho D."/>
            <person name="Lery L."/>
            <person name="Bisch P."/>
            <person name="Rossle S.C."/>
            <person name="Urmenyi T."/>
            <person name="Rael Pereira A."/>
            <person name="Silva R."/>
            <person name="Rondinelli E."/>
            <person name="von Kruger W."/>
            <person name="Martins O."/>
            <person name="Baldani J.I."/>
            <person name="Ferreira P.C."/>
        </authorList>
    </citation>
    <scope>NUCLEOTIDE SEQUENCE [LARGE SCALE GENOMIC DNA]</scope>
    <source>
        <strain>ATCC 49037 / DSM 5601 / CCUG 37298 / CIP 103539 / LMG 7603 / PAl5</strain>
    </source>
</reference>
<reference key="2">
    <citation type="journal article" date="2010" name="Stand. Genomic Sci.">
        <title>Two genome sequences of the same bacterial strain, Gluconacetobacter diazotrophicus PAl 5, suggest a new standard in genome sequence submission.</title>
        <authorList>
            <person name="Giongo A."/>
            <person name="Tyler H.L."/>
            <person name="Zipperer U.N."/>
            <person name="Triplett E.W."/>
        </authorList>
    </citation>
    <scope>NUCLEOTIDE SEQUENCE [LARGE SCALE GENOMIC DNA]</scope>
    <source>
        <strain>ATCC 49037 / DSM 5601 / CCUG 37298 / CIP 103539 / LMG 7603 / PAl5</strain>
    </source>
</reference>
<evidence type="ECO:0000255" key="1">
    <source>
        <dbReference type="HAMAP-Rule" id="MF_00019"/>
    </source>
</evidence>
<evidence type="ECO:0000305" key="2"/>